<proteinExistence type="inferred from homology"/>
<organism>
    <name type="scientific">Endomicrobium trichonymphae</name>
    <dbReference type="NCBI Taxonomy" id="1408204"/>
    <lineage>
        <taxon>Bacteria</taxon>
        <taxon>Pseudomonadati</taxon>
        <taxon>Elusimicrobiota</taxon>
        <taxon>Endomicrobiia</taxon>
        <taxon>Endomicrobiales</taxon>
        <taxon>Endomicrobiaceae</taxon>
        <taxon>Candidatus Endomicrobiellum</taxon>
    </lineage>
</organism>
<evidence type="ECO:0000255" key="1">
    <source>
        <dbReference type="HAMAP-Rule" id="MF_01345"/>
    </source>
</evidence>
<evidence type="ECO:0000305" key="2"/>
<accession>B1GZ92</accession>
<keyword id="KW-0687">Ribonucleoprotein</keyword>
<keyword id="KW-0689">Ribosomal protein</keyword>
<keyword id="KW-0694">RNA-binding</keyword>
<keyword id="KW-0699">rRNA-binding</keyword>
<reference key="1">
    <citation type="journal article" date="2008" name="Proc. Natl. Acad. Sci. U.S.A.">
        <title>Complete genome of the uncultured termite group 1 bacteria in a single host protist cell.</title>
        <authorList>
            <person name="Hongoh Y."/>
            <person name="Sharma V.K."/>
            <person name="Prakash T."/>
            <person name="Noda S."/>
            <person name="Taylor T.D."/>
            <person name="Kudo T."/>
            <person name="Sakaki Y."/>
            <person name="Toyoda A."/>
            <person name="Hattori M."/>
            <person name="Ohkuma M."/>
        </authorList>
    </citation>
    <scope>NUCLEOTIDE SEQUENCE [LARGE SCALE GENOMIC DNA]</scope>
</reference>
<protein>
    <recommendedName>
        <fullName evidence="1">Small ribosomal subunit protein uS17</fullName>
    </recommendedName>
    <alternativeName>
        <fullName evidence="2">30S ribosomal protein S17</fullName>
    </alternativeName>
</protein>
<feature type="chain" id="PRO_1000143320" description="Small ribosomal subunit protein uS17">
    <location>
        <begin position="1"/>
        <end position="87"/>
    </location>
</feature>
<comment type="function">
    <text evidence="1">One of the primary rRNA binding proteins, it binds specifically to the 5'-end of 16S ribosomal RNA.</text>
</comment>
<comment type="subunit">
    <text evidence="1">Part of the 30S ribosomal subunit.</text>
</comment>
<comment type="similarity">
    <text evidence="1">Belongs to the universal ribosomal protein uS17 family.</text>
</comment>
<sequence>MAERGKRKFRTGIVVSDKSNKTRQVSVERTYRHSLYDRVLRSKSKFIVHDEKNISHVGDTVKIMESRPLSKMKRWVLVEVVNKTSEI</sequence>
<dbReference type="EMBL" id="AP009510">
    <property type="protein sequence ID" value="BAG13574.1"/>
    <property type="molecule type" value="Genomic_DNA"/>
</dbReference>
<dbReference type="RefSeq" id="WP_015423103.1">
    <property type="nucleotide sequence ID" value="NC_020419.1"/>
</dbReference>
<dbReference type="SMR" id="B1GZ92"/>
<dbReference type="STRING" id="471821.TGRD_091"/>
<dbReference type="KEGG" id="eti:RSTT_076"/>
<dbReference type="KEGG" id="rsd:TGRD_091"/>
<dbReference type="PATRIC" id="fig|471821.5.peg.135"/>
<dbReference type="HOGENOM" id="CLU_073626_1_0_0"/>
<dbReference type="OrthoDB" id="9811714at2"/>
<dbReference type="Proteomes" id="UP000001691">
    <property type="component" value="Chromosome"/>
</dbReference>
<dbReference type="GO" id="GO:0022627">
    <property type="term" value="C:cytosolic small ribosomal subunit"/>
    <property type="evidence" value="ECO:0007669"/>
    <property type="project" value="TreeGrafter"/>
</dbReference>
<dbReference type="GO" id="GO:0019843">
    <property type="term" value="F:rRNA binding"/>
    <property type="evidence" value="ECO:0007669"/>
    <property type="project" value="UniProtKB-UniRule"/>
</dbReference>
<dbReference type="GO" id="GO:0003735">
    <property type="term" value="F:structural constituent of ribosome"/>
    <property type="evidence" value="ECO:0007669"/>
    <property type="project" value="InterPro"/>
</dbReference>
<dbReference type="GO" id="GO:0006412">
    <property type="term" value="P:translation"/>
    <property type="evidence" value="ECO:0007669"/>
    <property type="project" value="UniProtKB-UniRule"/>
</dbReference>
<dbReference type="CDD" id="cd00364">
    <property type="entry name" value="Ribosomal_uS17"/>
    <property type="match status" value="1"/>
</dbReference>
<dbReference type="Gene3D" id="2.40.50.140">
    <property type="entry name" value="Nucleic acid-binding proteins"/>
    <property type="match status" value="1"/>
</dbReference>
<dbReference type="HAMAP" id="MF_01345_B">
    <property type="entry name" value="Ribosomal_uS17_B"/>
    <property type="match status" value="1"/>
</dbReference>
<dbReference type="InterPro" id="IPR012340">
    <property type="entry name" value="NA-bd_OB-fold"/>
</dbReference>
<dbReference type="InterPro" id="IPR000266">
    <property type="entry name" value="Ribosomal_uS17"/>
</dbReference>
<dbReference type="InterPro" id="IPR019984">
    <property type="entry name" value="Ribosomal_uS17_bact/chlr"/>
</dbReference>
<dbReference type="InterPro" id="IPR019979">
    <property type="entry name" value="Ribosomal_uS17_CS"/>
</dbReference>
<dbReference type="NCBIfam" id="NF004123">
    <property type="entry name" value="PRK05610.1"/>
    <property type="match status" value="1"/>
</dbReference>
<dbReference type="NCBIfam" id="TIGR03635">
    <property type="entry name" value="uS17_bact"/>
    <property type="match status" value="1"/>
</dbReference>
<dbReference type="PANTHER" id="PTHR10744">
    <property type="entry name" value="40S RIBOSOMAL PROTEIN S11 FAMILY MEMBER"/>
    <property type="match status" value="1"/>
</dbReference>
<dbReference type="PANTHER" id="PTHR10744:SF1">
    <property type="entry name" value="SMALL RIBOSOMAL SUBUNIT PROTEIN US17M"/>
    <property type="match status" value="1"/>
</dbReference>
<dbReference type="Pfam" id="PF00366">
    <property type="entry name" value="Ribosomal_S17"/>
    <property type="match status" value="1"/>
</dbReference>
<dbReference type="PRINTS" id="PR00973">
    <property type="entry name" value="RIBOSOMALS17"/>
</dbReference>
<dbReference type="SUPFAM" id="SSF50249">
    <property type="entry name" value="Nucleic acid-binding proteins"/>
    <property type="match status" value="1"/>
</dbReference>
<dbReference type="PROSITE" id="PS00056">
    <property type="entry name" value="RIBOSOMAL_S17"/>
    <property type="match status" value="1"/>
</dbReference>
<gene>
    <name evidence="1" type="primary">rpsQ</name>
    <name type="ordered locus">TGRD_091</name>
</gene>
<name>RS17_ENDTX</name>